<reference key="1">
    <citation type="journal article" date="2000" name="Biochem. Biophys. Res. Commun.">
        <title>Sequence determination and analysis of the full-length genome of colorado tick fever virus, the type species of genus Coltivirus (Family Reoviridae).</title>
        <authorList>
            <person name="Attoui H."/>
            <person name="Billoir F."/>
            <person name="Biagini P."/>
            <person name="Cantaloube J.F."/>
            <person name="de Chesse R."/>
            <person name="de Micco P."/>
            <person name="de Lamballerie X."/>
        </authorList>
    </citation>
    <scope>NUCLEOTIDE SEQUENCE [GENOMIC RNA]</scope>
</reference>
<protein>
    <recommendedName>
        <fullName>Microtubule-associated protein VP10</fullName>
    </recommendedName>
</protein>
<sequence length="605" mass="68906">MLKRPAYYNIFLLPTGRRLAKTYNILENLITLPKTDWKLYETIEQKLKWMIQEYRSDWRDRLSHHERYGMKVRLTYRSESERTKLEEKITDLVISHGKKASTVHFCTRESYKGRVRANQILILLEPEGLGEVEGLTVRAEGNWMSLVTHCLFILGSTLTCFGFVDPARGCRFNLLPYIKTLHPNDKWLLDLQASWRLEYGVSRSIEEGALYDFFAESHTLYAVRTWPGCEKYLGALEAFVGRLAVLPAQVLTSKEHDFQSKLMSKAKKTGFHYLYYLVSFTMKTSLTDRIVKEALATVKVFSFVVGRDHLPAVGVYSGEDFSKQFLSMAVGTMDTPSRYAITIVSGMQVDVDVKSVTGIASFKDGTQHTIVDEILLQPARLVLLGRKGGGKSRLSKIFSELGYNVLDSDTYGKVLTLVADRGEDGLDDALKKFVRLTPDERKAVPSIFETEMDRLCEVFGSRGLRPYAQRCQQQAGRLHWELYAAFQEFYDRTIRVITPDKFRFAYFAELERGGFDDNGLTFSPELKTVVFVHSMPELFEAMGGCVAEIVPTHSTRLAILLRGQGLSVNAELHLHDFYVALNQNGARKVSLGWLVHALNELLKMR</sequence>
<organism>
    <name type="scientific">Colorado tick fever virus (strain USA/Florio N-7180)</name>
    <name type="common">CTFV</name>
    <dbReference type="NCBI Taxonomy" id="648168"/>
    <lineage>
        <taxon>Viruses</taxon>
        <taxon>Riboviria</taxon>
        <taxon>Orthornavirae</taxon>
        <taxon>Duplornaviricota</taxon>
        <taxon>Resentoviricetes</taxon>
        <taxon>Reovirales</taxon>
        <taxon>Spinareoviridae</taxon>
        <taxon>Coltivirus</taxon>
        <taxon>Colorado tick fever coltivirus</taxon>
    </lineage>
</organism>
<evidence type="ECO:0000250" key="1"/>
<feature type="chain" id="PRO_0000403199" description="Microtubule-associated protein VP10">
    <location>
        <begin position="1"/>
        <end position="605"/>
    </location>
</feature>
<comment type="function">
    <text evidence="1">Minor inner capsid component. Displays NTPase and RNA 5'-triphosphatase (RTPase) activities. May function as a cofactor of polymerase VP1. Associates with microtubules and plays a role in the formation, structural organization and morphology of viral inclusions, where the assembly of cores and the replication of viral RNA occur (By similarity).</text>
</comment>
<comment type="subunit">
    <text evidence="1">Interacts with VP1.</text>
</comment>
<comment type="subcellular location">
    <subcellularLocation>
        <location evidence="1">Virion</location>
    </subcellularLocation>
    <subcellularLocation>
        <location evidence="1">Host cytoplasm</location>
        <location evidence="1">Host cytoskeleton</location>
    </subcellularLocation>
</comment>
<accession>Q9ENK7</accession>
<proteinExistence type="inferred from homology"/>
<dbReference type="EMBL" id="AF139765">
    <property type="protein sequence ID" value="AAG00074.1"/>
    <property type="molecule type" value="Genomic_RNA"/>
</dbReference>
<dbReference type="RefSeq" id="NP_690899.1">
    <property type="nucleotide sequence ID" value="NC_004189.1"/>
</dbReference>
<dbReference type="GeneID" id="993317"/>
<dbReference type="KEGG" id="vg:993317"/>
<dbReference type="Proteomes" id="UP000001675">
    <property type="component" value="Genome"/>
</dbReference>
<dbReference type="GO" id="GO:0030430">
    <property type="term" value="C:host cell cytoplasm"/>
    <property type="evidence" value="ECO:0007669"/>
    <property type="project" value="UniProtKB-KW"/>
</dbReference>
<dbReference type="GO" id="GO:0044163">
    <property type="term" value="C:host cytoskeleton"/>
    <property type="evidence" value="ECO:0007669"/>
    <property type="project" value="UniProtKB-SubCell"/>
</dbReference>
<dbReference type="GO" id="GO:0044423">
    <property type="term" value="C:virion component"/>
    <property type="evidence" value="ECO:0007669"/>
    <property type="project" value="UniProtKB-KW"/>
</dbReference>
<name>VP10_CTFVL</name>
<organismHost>
    <name type="scientific">Callospermophilus lateralis</name>
    <name type="common">Golden-mantled ground squirrel</name>
    <name type="synonym">Spermophilus lateralis</name>
    <dbReference type="NCBI Taxonomy" id="76772"/>
</organismHost>
<organismHost>
    <name type="scientific">Dermacentor andersoni</name>
    <name type="common">Rocky mountain wood tick</name>
    <dbReference type="NCBI Taxonomy" id="34620"/>
</organismHost>
<organismHost>
    <name type="scientific">Erethizon dorsatum</name>
    <name type="common">North American porcupine</name>
    <name type="synonym">Hystrix dorsata</name>
    <dbReference type="NCBI Taxonomy" id="34844"/>
</organismHost>
<organismHost>
    <name type="scientific">Homo sapiens</name>
    <name type="common">Human</name>
    <dbReference type="NCBI Taxonomy" id="9606"/>
</organismHost>
<organismHost>
    <name type="scientific">Neotoma cinerea</name>
    <name type="common">Bushy-tailed woodrat</name>
    <name type="synonym">Mus cinereus</name>
    <dbReference type="NCBI Taxonomy" id="105147"/>
</organismHost>
<organismHost>
    <name type="scientific">Peromyscus maniculatus</name>
    <name type="common">North American deer mouse</name>
    <dbReference type="NCBI Taxonomy" id="10042"/>
</organismHost>
<keyword id="KW-1035">Host cytoplasm</keyword>
<keyword id="KW-1037">Host cytoskeleton</keyword>
<keyword id="KW-1185">Reference proteome</keyword>
<keyword id="KW-0946">Virion</keyword>